<gene>
    <name evidence="1" type="primary">rpl36</name>
</gene>
<reference key="1">
    <citation type="journal article" date="2006" name="BMC Evol. Biol.">
        <title>Phylogenetic analyses of Vitis (Vitaceae) based on complete chloroplast genome sequences: effects of taxon sampling and phylogenetic methods on resolving relationships among rosids.</title>
        <authorList>
            <person name="Jansen R.K."/>
            <person name="Kaittanis C."/>
            <person name="Lee S.-B."/>
            <person name="Saski C."/>
            <person name="Tomkins J."/>
            <person name="Alverson A.J."/>
            <person name="Daniell H."/>
        </authorList>
    </citation>
    <scope>NUCLEOTIDE SEQUENCE [LARGE SCALE GENOMIC DNA]</scope>
    <source>
        <strain>cv. Maxxa</strain>
    </source>
</reference>
<evidence type="ECO:0000255" key="1">
    <source>
        <dbReference type="HAMAP-Rule" id="MF_00251"/>
    </source>
</evidence>
<evidence type="ECO:0000305" key="2"/>
<feature type="chain" id="PRO_0000276840" description="Large ribosomal subunit protein bL36c">
    <location>
        <begin position="1"/>
        <end position="37"/>
    </location>
</feature>
<dbReference type="EMBL" id="DQ424856">
    <property type="protein sequence ID" value="ABE47567.1"/>
    <property type="molecule type" value="Genomic_DNA"/>
</dbReference>
<dbReference type="RefSeq" id="YP_002608404.1">
    <property type="nucleotide sequence ID" value="NC_012119.1"/>
</dbReference>
<dbReference type="RefSeq" id="YP_567111.1">
    <property type="nucleotide sequence ID" value="NC_007957.1"/>
</dbReference>
<dbReference type="SMR" id="Q0ZIY5"/>
<dbReference type="FunCoup" id="Q0ZIY5">
    <property type="interactions" value="54"/>
</dbReference>
<dbReference type="STRING" id="29760.Q0ZIY5"/>
<dbReference type="GeneID" id="4025133"/>
<dbReference type="GeneID" id="7498541"/>
<dbReference type="KEGG" id="vvi:4025133"/>
<dbReference type="KEGG" id="vvi:7498541"/>
<dbReference type="InParanoid" id="Q0ZIY5"/>
<dbReference type="Proteomes" id="UP000009183">
    <property type="component" value="Chloroplast"/>
</dbReference>
<dbReference type="GO" id="GO:0009507">
    <property type="term" value="C:chloroplast"/>
    <property type="evidence" value="ECO:0007669"/>
    <property type="project" value="UniProtKB-SubCell"/>
</dbReference>
<dbReference type="GO" id="GO:1990904">
    <property type="term" value="C:ribonucleoprotein complex"/>
    <property type="evidence" value="ECO:0007669"/>
    <property type="project" value="UniProtKB-KW"/>
</dbReference>
<dbReference type="GO" id="GO:0005840">
    <property type="term" value="C:ribosome"/>
    <property type="evidence" value="ECO:0007669"/>
    <property type="project" value="UniProtKB-KW"/>
</dbReference>
<dbReference type="GO" id="GO:0003735">
    <property type="term" value="F:structural constituent of ribosome"/>
    <property type="evidence" value="ECO:0007669"/>
    <property type="project" value="InterPro"/>
</dbReference>
<dbReference type="GO" id="GO:0006412">
    <property type="term" value="P:translation"/>
    <property type="evidence" value="ECO:0007669"/>
    <property type="project" value="UniProtKB-UniRule"/>
</dbReference>
<dbReference type="HAMAP" id="MF_00251">
    <property type="entry name" value="Ribosomal_bL36"/>
    <property type="match status" value="1"/>
</dbReference>
<dbReference type="InterPro" id="IPR000473">
    <property type="entry name" value="Ribosomal_bL36"/>
</dbReference>
<dbReference type="InterPro" id="IPR035977">
    <property type="entry name" value="Ribosomal_bL36_sp"/>
</dbReference>
<dbReference type="NCBIfam" id="TIGR01022">
    <property type="entry name" value="rpmJ_bact"/>
    <property type="match status" value="1"/>
</dbReference>
<dbReference type="PANTHER" id="PTHR42888">
    <property type="entry name" value="50S RIBOSOMAL PROTEIN L36, CHLOROPLASTIC"/>
    <property type="match status" value="1"/>
</dbReference>
<dbReference type="PANTHER" id="PTHR42888:SF1">
    <property type="entry name" value="LARGE RIBOSOMAL SUBUNIT PROTEIN BL36C"/>
    <property type="match status" value="1"/>
</dbReference>
<dbReference type="Pfam" id="PF00444">
    <property type="entry name" value="Ribosomal_L36"/>
    <property type="match status" value="1"/>
</dbReference>
<dbReference type="SUPFAM" id="SSF57840">
    <property type="entry name" value="Ribosomal protein L36"/>
    <property type="match status" value="1"/>
</dbReference>
<dbReference type="PROSITE" id="PS00828">
    <property type="entry name" value="RIBOSOMAL_L36"/>
    <property type="match status" value="1"/>
</dbReference>
<keyword id="KW-0150">Chloroplast</keyword>
<keyword id="KW-0934">Plastid</keyword>
<keyword id="KW-1185">Reference proteome</keyword>
<keyword id="KW-0687">Ribonucleoprotein</keyword>
<keyword id="KW-0689">Ribosomal protein</keyword>
<accession>Q0ZIY5</accession>
<organism>
    <name type="scientific">Vitis vinifera</name>
    <name type="common">Grape</name>
    <dbReference type="NCBI Taxonomy" id="29760"/>
    <lineage>
        <taxon>Eukaryota</taxon>
        <taxon>Viridiplantae</taxon>
        <taxon>Streptophyta</taxon>
        <taxon>Embryophyta</taxon>
        <taxon>Tracheophyta</taxon>
        <taxon>Spermatophyta</taxon>
        <taxon>Magnoliopsida</taxon>
        <taxon>eudicotyledons</taxon>
        <taxon>Gunneridae</taxon>
        <taxon>Pentapetalae</taxon>
        <taxon>rosids</taxon>
        <taxon>Vitales</taxon>
        <taxon>Vitaceae</taxon>
        <taxon>Viteae</taxon>
        <taxon>Vitis</taxon>
    </lineage>
</organism>
<geneLocation type="chloroplast"/>
<sequence>MKIRASVRKICEKCRLIRRRGRIIVICPNPRHKQRQG</sequence>
<comment type="subcellular location">
    <subcellularLocation>
        <location>Plastid</location>
        <location>Chloroplast</location>
    </subcellularLocation>
</comment>
<comment type="similarity">
    <text evidence="1">Belongs to the bacterial ribosomal protein bL36 family.</text>
</comment>
<proteinExistence type="inferred from homology"/>
<protein>
    <recommendedName>
        <fullName evidence="1">Large ribosomal subunit protein bL36c</fullName>
    </recommendedName>
    <alternativeName>
        <fullName evidence="2">50S ribosomal protein L36, chloroplastic</fullName>
    </alternativeName>
</protein>
<name>RK36_VITVI</name>